<feature type="chain" id="PRO_1000130203" description="tRNA (guanine-N(1)-)-methyltransferase">
    <location>
        <begin position="1"/>
        <end position="255"/>
    </location>
</feature>
<feature type="binding site" evidence="1">
    <location>
        <position position="113"/>
    </location>
    <ligand>
        <name>S-adenosyl-L-methionine</name>
        <dbReference type="ChEBI" id="CHEBI:59789"/>
    </ligand>
</feature>
<feature type="binding site" evidence="1">
    <location>
        <begin position="133"/>
        <end position="138"/>
    </location>
    <ligand>
        <name>S-adenosyl-L-methionine</name>
        <dbReference type="ChEBI" id="CHEBI:59789"/>
    </ligand>
</feature>
<gene>
    <name evidence="1" type="primary">trmD</name>
    <name type="ordered locus">SG2652</name>
</gene>
<reference key="1">
    <citation type="journal article" date="2008" name="Genome Res.">
        <title>Comparative genome analysis of Salmonella enteritidis PT4 and Salmonella gallinarum 287/91 provides insights into evolutionary and host adaptation pathways.</title>
        <authorList>
            <person name="Thomson N.R."/>
            <person name="Clayton D.J."/>
            <person name="Windhorst D."/>
            <person name="Vernikos G."/>
            <person name="Davidson S."/>
            <person name="Churcher C."/>
            <person name="Quail M.A."/>
            <person name="Stevens M."/>
            <person name="Jones M.A."/>
            <person name="Watson M."/>
            <person name="Barron A."/>
            <person name="Layton A."/>
            <person name="Pickard D."/>
            <person name="Kingsley R.A."/>
            <person name="Bignell A."/>
            <person name="Clark L."/>
            <person name="Harris B."/>
            <person name="Ormond D."/>
            <person name="Abdellah Z."/>
            <person name="Brooks K."/>
            <person name="Cherevach I."/>
            <person name="Chillingworth T."/>
            <person name="Woodward J."/>
            <person name="Norberczak H."/>
            <person name="Lord A."/>
            <person name="Arrowsmith C."/>
            <person name="Jagels K."/>
            <person name="Moule S."/>
            <person name="Mungall K."/>
            <person name="Saunders M."/>
            <person name="Whitehead S."/>
            <person name="Chabalgoity J.A."/>
            <person name="Maskell D."/>
            <person name="Humphreys T."/>
            <person name="Roberts M."/>
            <person name="Barrow P.A."/>
            <person name="Dougan G."/>
            <person name="Parkhill J."/>
        </authorList>
    </citation>
    <scope>NUCLEOTIDE SEQUENCE [LARGE SCALE GENOMIC DNA]</scope>
    <source>
        <strain>287/91 / NCTC 13346</strain>
    </source>
</reference>
<evidence type="ECO:0000255" key="1">
    <source>
        <dbReference type="HAMAP-Rule" id="MF_00605"/>
    </source>
</evidence>
<keyword id="KW-0963">Cytoplasm</keyword>
<keyword id="KW-0489">Methyltransferase</keyword>
<keyword id="KW-0949">S-adenosyl-L-methionine</keyword>
<keyword id="KW-0808">Transferase</keyword>
<keyword id="KW-0819">tRNA processing</keyword>
<accession>B5RD83</accession>
<sequence>MFIGIVSLFPEMFRAITDYGVTGRAVKKGLLNIQSWSPRDFAHDRHRTVDDRPYGGGPGMLMMVQPLRDAIHAAKAAAGEGAKVIYLSPQGRKLDQAGVSELATNQKLILVCGRYEGVDERVIQTEIDEEWSIGDYVLSGGELPAMTLIDSVARFIPGVLGHEASAIEDSFADGLLDCPHYTRPEVLEGMEVPPVLLSGNHAEIRRWRLKQSLGRTWLRRPELLENLALTEEQARLLAEFKTEHAQQQHKHDGMA</sequence>
<name>TRMD_SALG2</name>
<comment type="function">
    <text evidence="1">Specifically methylates guanosine-37 in various tRNAs.</text>
</comment>
<comment type="catalytic activity">
    <reaction evidence="1">
        <text>guanosine(37) in tRNA + S-adenosyl-L-methionine = N(1)-methylguanosine(37) in tRNA + S-adenosyl-L-homocysteine + H(+)</text>
        <dbReference type="Rhea" id="RHEA:36899"/>
        <dbReference type="Rhea" id="RHEA-COMP:10145"/>
        <dbReference type="Rhea" id="RHEA-COMP:10147"/>
        <dbReference type="ChEBI" id="CHEBI:15378"/>
        <dbReference type="ChEBI" id="CHEBI:57856"/>
        <dbReference type="ChEBI" id="CHEBI:59789"/>
        <dbReference type="ChEBI" id="CHEBI:73542"/>
        <dbReference type="ChEBI" id="CHEBI:74269"/>
        <dbReference type="EC" id="2.1.1.228"/>
    </reaction>
</comment>
<comment type="subunit">
    <text evidence="1">Homodimer.</text>
</comment>
<comment type="subcellular location">
    <subcellularLocation>
        <location evidence="1">Cytoplasm</location>
    </subcellularLocation>
</comment>
<comment type="similarity">
    <text evidence="1">Belongs to the RNA methyltransferase TrmD family.</text>
</comment>
<organism>
    <name type="scientific">Salmonella gallinarum (strain 287/91 / NCTC 13346)</name>
    <dbReference type="NCBI Taxonomy" id="550538"/>
    <lineage>
        <taxon>Bacteria</taxon>
        <taxon>Pseudomonadati</taxon>
        <taxon>Pseudomonadota</taxon>
        <taxon>Gammaproteobacteria</taxon>
        <taxon>Enterobacterales</taxon>
        <taxon>Enterobacteriaceae</taxon>
        <taxon>Salmonella</taxon>
    </lineage>
</organism>
<dbReference type="EC" id="2.1.1.228" evidence="1"/>
<dbReference type="EMBL" id="AM933173">
    <property type="protein sequence ID" value="CAR38469.1"/>
    <property type="molecule type" value="Genomic_DNA"/>
</dbReference>
<dbReference type="RefSeq" id="WP_000469804.1">
    <property type="nucleotide sequence ID" value="NC_011274.1"/>
</dbReference>
<dbReference type="SMR" id="B5RD83"/>
<dbReference type="KEGG" id="seg:SG2652"/>
<dbReference type="HOGENOM" id="CLU_047363_0_1_6"/>
<dbReference type="Proteomes" id="UP000008321">
    <property type="component" value="Chromosome"/>
</dbReference>
<dbReference type="GO" id="GO:0005829">
    <property type="term" value="C:cytosol"/>
    <property type="evidence" value="ECO:0007669"/>
    <property type="project" value="TreeGrafter"/>
</dbReference>
<dbReference type="GO" id="GO:0052906">
    <property type="term" value="F:tRNA (guanine(37)-N1)-methyltransferase activity"/>
    <property type="evidence" value="ECO:0007669"/>
    <property type="project" value="UniProtKB-UniRule"/>
</dbReference>
<dbReference type="GO" id="GO:0002939">
    <property type="term" value="P:tRNA N1-guanine methylation"/>
    <property type="evidence" value="ECO:0007669"/>
    <property type="project" value="TreeGrafter"/>
</dbReference>
<dbReference type="CDD" id="cd18080">
    <property type="entry name" value="TrmD-like"/>
    <property type="match status" value="1"/>
</dbReference>
<dbReference type="FunFam" id="1.10.1270.20:FF:000001">
    <property type="entry name" value="tRNA (guanine-N(1)-)-methyltransferase"/>
    <property type="match status" value="1"/>
</dbReference>
<dbReference type="FunFam" id="3.40.1280.10:FF:000001">
    <property type="entry name" value="tRNA (guanine-N(1)-)-methyltransferase"/>
    <property type="match status" value="1"/>
</dbReference>
<dbReference type="Gene3D" id="3.40.1280.10">
    <property type="match status" value="1"/>
</dbReference>
<dbReference type="Gene3D" id="1.10.1270.20">
    <property type="entry name" value="tRNA(m1g37)methyltransferase, domain 2"/>
    <property type="match status" value="1"/>
</dbReference>
<dbReference type="HAMAP" id="MF_00605">
    <property type="entry name" value="TrmD"/>
    <property type="match status" value="1"/>
</dbReference>
<dbReference type="InterPro" id="IPR029028">
    <property type="entry name" value="Alpha/beta_knot_MTases"/>
</dbReference>
<dbReference type="InterPro" id="IPR023148">
    <property type="entry name" value="tRNA_m1G_MeTrfase_C_sf"/>
</dbReference>
<dbReference type="InterPro" id="IPR002649">
    <property type="entry name" value="tRNA_m1G_MeTrfase_TrmD"/>
</dbReference>
<dbReference type="InterPro" id="IPR029026">
    <property type="entry name" value="tRNA_m1G_MTases_N"/>
</dbReference>
<dbReference type="InterPro" id="IPR016009">
    <property type="entry name" value="tRNA_MeTrfase_TRMD/TRM10"/>
</dbReference>
<dbReference type="NCBIfam" id="NF000648">
    <property type="entry name" value="PRK00026.1"/>
    <property type="match status" value="1"/>
</dbReference>
<dbReference type="NCBIfam" id="TIGR00088">
    <property type="entry name" value="trmD"/>
    <property type="match status" value="1"/>
</dbReference>
<dbReference type="PANTHER" id="PTHR46417">
    <property type="entry name" value="TRNA (GUANINE-N(1)-)-METHYLTRANSFERASE"/>
    <property type="match status" value="1"/>
</dbReference>
<dbReference type="PANTHER" id="PTHR46417:SF1">
    <property type="entry name" value="TRNA (GUANINE-N(1)-)-METHYLTRANSFERASE"/>
    <property type="match status" value="1"/>
</dbReference>
<dbReference type="Pfam" id="PF01746">
    <property type="entry name" value="tRNA_m1G_MT"/>
    <property type="match status" value="1"/>
</dbReference>
<dbReference type="PIRSF" id="PIRSF000386">
    <property type="entry name" value="tRNA_mtase"/>
    <property type="match status" value="1"/>
</dbReference>
<dbReference type="SUPFAM" id="SSF75217">
    <property type="entry name" value="alpha/beta knot"/>
    <property type="match status" value="1"/>
</dbReference>
<proteinExistence type="inferred from homology"/>
<protein>
    <recommendedName>
        <fullName evidence="1">tRNA (guanine-N(1)-)-methyltransferase</fullName>
        <ecNumber evidence="1">2.1.1.228</ecNumber>
    </recommendedName>
    <alternativeName>
        <fullName evidence="1">M1G-methyltransferase</fullName>
    </alternativeName>
    <alternativeName>
        <fullName evidence="1">tRNA [GM37] methyltransferase</fullName>
    </alternativeName>
</protein>